<feature type="chain" id="PRO_0000137707" description="Small ribosomal subunit protein eS31">
    <location>
        <begin position="1"/>
        <end position="75"/>
    </location>
</feature>
<feature type="zinc finger region" description="C4-type" evidence="1">
    <location>
        <begin position="41"/>
        <end position="63"/>
    </location>
</feature>
<feature type="binding site" evidence="1">
    <location>
        <position position="41"/>
    </location>
    <ligand>
        <name>Zn(2+)</name>
        <dbReference type="ChEBI" id="CHEBI:29105"/>
    </ligand>
</feature>
<feature type="binding site" evidence="1">
    <location>
        <position position="44"/>
    </location>
    <ligand>
        <name>Zn(2+)</name>
        <dbReference type="ChEBI" id="CHEBI:29105"/>
    </ligand>
</feature>
<feature type="binding site" evidence="1">
    <location>
        <position position="60"/>
    </location>
    <ligand>
        <name>Zn(2+)</name>
        <dbReference type="ChEBI" id="CHEBI:29105"/>
    </ligand>
</feature>
<feature type="binding site" evidence="1">
    <location>
        <position position="63"/>
    </location>
    <ligand>
        <name>Zn(2+)</name>
        <dbReference type="ChEBI" id="CHEBI:29105"/>
    </ligand>
</feature>
<dbReference type="EMBL" id="HM370296">
    <property type="protein sequence ID" value="ADK88909.1"/>
    <property type="molecule type" value="Genomic_DNA"/>
</dbReference>
<dbReference type="EMBL" id="AE006641">
    <property type="protein sequence ID" value="AAK40759.1"/>
    <property type="molecule type" value="Genomic_DNA"/>
</dbReference>
<dbReference type="PIR" id="H90187">
    <property type="entry name" value="H90187"/>
</dbReference>
<dbReference type="PDB" id="9FHL">
    <property type="method" value="EM"/>
    <property type="resolution" value="2.50 A"/>
    <property type="chains" value="Y=1-75"/>
</dbReference>
<dbReference type="PDB" id="9FRA">
    <property type="method" value="EM"/>
    <property type="resolution" value="2.80 A"/>
    <property type="chains" value="Y=1-75"/>
</dbReference>
<dbReference type="PDB" id="9FRK">
    <property type="method" value="EM"/>
    <property type="resolution" value="3.00 A"/>
    <property type="chains" value="Y=1-75"/>
</dbReference>
<dbReference type="PDB" id="9FRL">
    <property type="method" value="EM"/>
    <property type="resolution" value="2.97 A"/>
    <property type="chains" value="Y=1-75"/>
</dbReference>
<dbReference type="PDB" id="9FS6">
    <property type="method" value="EM"/>
    <property type="resolution" value="2.90 A"/>
    <property type="chains" value="Y=1-75"/>
</dbReference>
<dbReference type="PDB" id="9FS8">
    <property type="method" value="EM"/>
    <property type="resolution" value="3.70 A"/>
    <property type="chains" value="Y=1-75"/>
</dbReference>
<dbReference type="PDB" id="9FSF">
    <property type="method" value="EM"/>
    <property type="resolution" value="2.80 A"/>
    <property type="chains" value="Y=1-75"/>
</dbReference>
<dbReference type="PDB" id="9FY0">
    <property type="method" value="EM"/>
    <property type="resolution" value="2.90 A"/>
    <property type="chains" value="Y=1-75"/>
</dbReference>
<dbReference type="PDBsum" id="9FHL"/>
<dbReference type="PDBsum" id="9FRA"/>
<dbReference type="PDBsum" id="9FRK"/>
<dbReference type="PDBsum" id="9FRL"/>
<dbReference type="PDBsum" id="9FS6"/>
<dbReference type="PDBsum" id="9FS8"/>
<dbReference type="PDBsum" id="9FSF"/>
<dbReference type="PDBsum" id="9FY0"/>
<dbReference type="EMDB" id="EMD-50445"/>
<dbReference type="EMDB" id="EMD-50709"/>
<dbReference type="EMDB" id="EMD-50716"/>
<dbReference type="EMDB" id="EMD-50717"/>
<dbReference type="EMDB" id="EMD-50724"/>
<dbReference type="EMDB" id="EMD-50725"/>
<dbReference type="EMDB" id="EMD-50727"/>
<dbReference type="EMDB" id="EMD-50854"/>
<dbReference type="SMR" id="Q97ZY7"/>
<dbReference type="FunCoup" id="Q97ZY7">
    <property type="interactions" value="64"/>
</dbReference>
<dbReference type="STRING" id="273057.SSO5844"/>
<dbReference type="PaxDb" id="273057-SSO5844"/>
<dbReference type="EnsemblBacteria" id="AAK40759">
    <property type="protein sequence ID" value="AAK40759"/>
    <property type="gene ID" value="SSO5844"/>
</dbReference>
<dbReference type="KEGG" id="sso:SSO5844"/>
<dbReference type="PATRIC" id="fig|273057.12.peg.427"/>
<dbReference type="eggNOG" id="arCOG04183">
    <property type="taxonomic scope" value="Archaea"/>
</dbReference>
<dbReference type="HOGENOM" id="CLU_179743_1_0_2"/>
<dbReference type="InParanoid" id="Q97ZY7"/>
<dbReference type="PhylomeDB" id="Q97ZY7"/>
<dbReference type="Proteomes" id="UP000001974">
    <property type="component" value="Chromosome"/>
</dbReference>
<dbReference type="GO" id="GO:1990904">
    <property type="term" value="C:ribonucleoprotein complex"/>
    <property type="evidence" value="ECO:0007669"/>
    <property type="project" value="UniProtKB-KW"/>
</dbReference>
<dbReference type="GO" id="GO:0005840">
    <property type="term" value="C:ribosome"/>
    <property type="evidence" value="ECO:0007669"/>
    <property type="project" value="UniProtKB-KW"/>
</dbReference>
<dbReference type="GO" id="GO:0003735">
    <property type="term" value="F:structural constituent of ribosome"/>
    <property type="evidence" value="ECO:0007669"/>
    <property type="project" value="InterPro"/>
</dbReference>
<dbReference type="GO" id="GO:0008270">
    <property type="term" value="F:zinc ion binding"/>
    <property type="evidence" value="ECO:0007669"/>
    <property type="project" value="UniProtKB-UniRule"/>
</dbReference>
<dbReference type="GO" id="GO:0006412">
    <property type="term" value="P:translation"/>
    <property type="evidence" value="ECO:0007669"/>
    <property type="project" value="UniProtKB-UniRule"/>
</dbReference>
<dbReference type="Gene3D" id="6.20.50.180">
    <property type="match status" value="1"/>
</dbReference>
<dbReference type="HAMAP" id="MF_00777">
    <property type="entry name" value="Ribosomal_eS31"/>
    <property type="match status" value="1"/>
</dbReference>
<dbReference type="InterPro" id="IPR002906">
    <property type="entry name" value="Ribosomal_eS31"/>
</dbReference>
<dbReference type="InterPro" id="IPR022845">
    <property type="entry name" value="Ribosomal_eS31_arc"/>
</dbReference>
<dbReference type="InterPro" id="IPR011332">
    <property type="entry name" value="Ribosomal_zn-bd"/>
</dbReference>
<dbReference type="NCBIfam" id="NF001669">
    <property type="entry name" value="PRK00432.1"/>
    <property type="match status" value="1"/>
</dbReference>
<dbReference type="Pfam" id="PF01599">
    <property type="entry name" value="Ribosomal_S27"/>
    <property type="match status" value="1"/>
</dbReference>
<dbReference type="SMART" id="SM01402">
    <property type="entry name" value="Ribosomal_S27"/>
    <property type="match status" value="1"/>
</dbReference>
<dbReference type="SUPFAM" id="SSF57829">
    <property type="entry name" value="Zn-binding ribosomal proteins"/>
    <property type="match status" value="1"/>
</dbReference>
<gene>
    <name evidence="1" type="primary">rps27ae</name>
    <name type="ordered locus">SSO5844</name>
</gene>
<keyword id="KW-0002">3D-structure</keyword>
<keyword id="KW-0479">Metal-binding</keyword>
<keyword id="KW-1185">Reference proteome</keyword>
<keyword id="KW-0687">Ribonucleoprotein</keyword>
<keyword id="KW-0689">Ribosomal protein</keyword>
<keyword id="KW-0862">Zinc</keyword>
<keyword id="KW-0863">Zinc-finger</keyword>
<sequence>MLELNKRKEEAKVAKEQKVKAIVRTYYVIEGNKVKLKNKKCPRCGSIMAHHLKPNERWSCGKCGYTEFIGASKKR</sequence>
<proteinExistence type="evidence at protein level"/>
<protein>
    <recommendedName>
        <fullName evidence="1">Small ribosomal subunit protein eS31</fullName>
    </recommendedName>
    <alternativeName>
        <fullName evidence="2">30S ribosomal protein S27ae</fullName>
    </alternativeName>
</protein>
<name>RS27A_SACS2</name>
<comment type="cofactor">
    <cofactor evidence="1">
        <name>Zn(2+)</name>
        <dbReference type="ChEBI" id="CHEBI:29105"/>
    </cofactor>
    <text evidence="1">Binds 1 zinc ion per subunit.</text>
</comment>
<comment type="subunit">
    <text evidence="1">Part of the 30S ribosomal subunit.</text>
</comment>
<comment type="similarity">
    <text evidence="1">Belongs to the eukaryotic ribosomal protein eS31 family.</text>
</comment>
<accession>Q97ZY7</accession>
<accession>E0A3F3</accession>
<reference key="1">
    <citation type="submission" date="2010-05" db="EMBL/GenBank/DDBJ databases">
        <title>An update of the SSO5844-SSO0434-SSO0433 genomic region of the archaea Sulfolobus solfataricus P2.</title>
        <authorList>
            <person name="Hecker A."/>
        </authorList>
    </citation>
    <scope>NUCLEOTIDE SEQUENCE [GENOMIC DNA]</scope>
    <source>
        <strain>ATCC 35092 / DSM 1617 / JCM 11322 / P2</strain>
    </source>
</reference>
<reference key="2">
    <citation type="journal article" date="2001" name="Proc. Natl. Acad. Sci. U.S.A.">
        <title>The complete genome of the crenarchaeon Sulfolobus solfataricus P2.</title>
        <authorList>
            <person name="She Q."/>
            <person name="Singh R.K."/>
            <person name="Confalonieri F."/>
            <person name="Zivanovic Y."/>
            <person name="Allard G."/>
            <person name="Awayez M.J."/>
            <person name="Chan-Weiher C.C.-Y."/>
            <person name="Clausen I.G."/>
            <person name="Curtis B.A."/>
            <person name="De Moors A."/>
            <person name="Erauso G."/>
            <person name="Fletcher C."/>
            <person name="Gordon P.M.K."/>
            <person name="Heikamp-de Jong I."/>
            <person name="Jeffries A.C."/>
            <person name="Kozera C.J."/>
            <person name="Medina N."/>
            <person name="Peng X."/>
            <person name="Thi-Ngoc H.P."/>
            <person name="Redder P."/>
            <person name="Schenk M.E."/>
            <person name="Theriault C."/>
            <person name="Tolstrup N."/>
            <person name="Charlebois R.L."/>
            <person name="Doolittle W.F."/>
            <person name="Duguet M."/>
            <person name="Gaasterland T."/>
            <person name="Garrett R.A."/>
            <person name="Ragan M.A."/>
            <person name="Sensen C.W."/>
            <person name="Van der Oost J."/>
        </authorList>
    </citation>
    <scope>NUCLEOTIDE SEQUENCE [LARGE SCALE GENOMIC DNA]</scope>
    <source>
        <strain>ATCC 35092 / DSM 1617 / JCM 11322 / P2</strain>
    </source>
</reference>
<organism>
    <name type="scientific">Saccharolobus solfataricus (strain ATCC 35092 / DSM 1617 / JCM 11322 / P2)</name>
    <name type="common">Sulfolobus solfataricus</name>
    <dbReference type="NCBI Taxonomy" id="273057"/>
    <lineage>
        <taxon>Archaea</taxon>
        <taxon>Thermoproteota</taxon>
        <taxon>Thermoprotei</taxon>
        <taxon>Sulfolobales</taxon>
        <taxon>Sulfolobaceae</taxon>
        <taxon>Saccharolobus</taxon>
    </lineage>
</organism>
<evidence type="ECO:0000255" key="1">
    <source>
        <dbReference type="HAMAP-Rule" id="MF_00777"/>
    </source>
</evidence>
<evidence type="ECO:0000305" key="2"/>